<comment type="function">
    <text evidence="2">Catalyzes the condensation of para-aminobenzoate (pABA) with 6-hydroxymethyl-7,8-dihydropterin diphosphate (DHPt-PP) to form 7,8-dihydropteroate (H2Pte), the immediate precursor of folate derivatives.</text>
</comment>
<comment type="catalytic activity">
    <reaction evidence="2">
        <text>(7,8-dihydropterin-6-yl)methyl diphosphate + 4-aminobenzoate = 7,8-dihydropteroate + diphosphate</text>
        <dbReference type="Rhea" id="RHEA:19949"/>
        <dbReference type="ChEBI" id="CHEBI:17836"/>
        <dbReference type="ChEBI" id="CHEBI:17839"/>
        <dbReference type="ChEBI" id="CHEBI:33019"/>
        <dbReference type="ChEBI" id="CHEBI:72950"/>
        <dbReference type="EC" id="2.5.1.15"/>
    </reaction>
</comment>
<comment type="cofactor">
    <cofactor evidence="2">
        <name>Mg(2+)</name>
        <dbReference type="ChEBI" id="CHEBI:18420"/>
    </cofactor>
</comment>
<comment type="pathway">
    <text>Cofactor biosynthesis; tetrahydrofolate biosynthesis; 7,8-dihydrofolate from 2-amino-4-hydroxy-6-hydroxymethyl-7,8-dihydropteridine diphosphate and 4-aminobenzoate: step 1/2.</text>
</comment>
<comment type="subunit">
    <text evidence="1">Homodimer.</text>
</comment>
<comment type="similarity">
    <text evidence="5">Belongs to the DHPS family.</text>
</comment>
<reference key="1">
    <citation type="journal article" date="2003" name="Proc. Natl. Acad. Sci. U.S.A.">
        <title>The complete genome sequence of Mycobacterium bovis.</title>
        <authorList>
            <person name="Garnier T."/>
            <person name="Eiglmeier K."/>
            <person name="Camus J.-C."/>
            <person name="Medina N."/>
            <person name="Mansoor H."/>
            <person name="Pryor M."/>
            <person name="Duthoy S."/>
            <person name="Grondin S."/>
            <person name="Lacroix C."/>
            <person name="Monsempe C."/>
            <person name="Simon S."/>
            <person name="Harris B."/>
            <person name="Atkin R."/>
            <person name="Doggett J."/>
            <person name="Mayes R."/>
            <person name="Keating L."/>
            <person name="Wheeler P.R."/>
            <person name="Parkhill J."/>
            <person name="Barrell B.G."/>
            <person name="Cole S.T."/>
            <person name="Gordon S.V."/>
            <person name="Hewinson R.G."/>
        </authorList>
    </citation>
    <scope>NUCLEOTIDE SEQUENCE [LARGE SCALE GENOMIC DNA]</scope>
    <source>
        <strain>ATCC BAA-935 / AF2122/97</strain>
    </source>
</reference>
<reference key="2">
    <citation type="journal article" date="2017" name="Genome Announc.">
        <title>Updated reference genome sequence and annotation of Mycobacterium bovis AF2122/97.</title>
        <authorList>
            <person name="Malone K.M."/>
            <person name="Farrell D."/>
            <person name="Stuber T.P."/>
            <person name="Schubert O.T."/>
            <person name="Aebersold R."/>
            <person name="Robbe-Austerman S."/>
            <person name="Gordon S.V."/>
        </authorList>
    </citation>
    <scope>NUCLEOTIDE SEQUENCE [LARGE SCALE GENOMIC DNA]</scope>
    <scope>GENOME REANNOTATION</scope>
    <source>
        <strain>ATCC BAA-935 / AF2122/97</strain>
    </source>
</reference>
<protein>
    <recommendedName>
        <fullName>Dihydropteroate synthase</fullName>
        <shortName>DHPS</shortName>
        <ecNumber>2.5.1.15</ecNumber>
    </recommendedName>
    <alternativeName>
        <fullName>Dihydropteroate pyrophosphorylase</fullName>
    </alternativeName>
</protein>
<evidence type="ECO:0000250" key="1"/>
<evidence type="ECO:0000250" key="2">
    <source>
        <dbReference type="UniProtKB" id="P0AC13"/>
    </source>
</evidence>
<evidence type="ECO:0000250" key="3">
    <source>
        <dbReference type="UniProtKB" id="P9WND1"/>
    </source>
</evidence>
<evidence type="ECO:0000255" key="4">
    <source>
        <dbReference type="PROSITE-ProRule" id="PRU00334"/>
    </source>
</evidence>
<evidence type="ECO:0000305" key="5"/>
<gene>
    <name type="primary">folP1</name>
    <name type="ordered locus">BQ2027_MB3638C</name>
</gene>
<name>DHPS1_MYCBO</name>
<proteinExistence type="inferred from homology"/>
<accession>P0A579</accession>
<accession>A0A1R3Y584</accession>
<accession>O06274</accession>
<accession>X2BNV3</accession>
<sequence>MSPAPVQVMGVLNVTDDSFSDGGCYLDLDDAVKHGLAMAAAGAGIVDVGGESSRPGATRVDPAVETSRVIPVVKELAAQGITVSIDTMRADVARAALQNGAQMVNDVSGGRADPAMGPLLAEADVPWVLMHWRAVSADTPHVPVRYGNVVAEVRADLLASVADAVAAGVDPARLVLDPGLGFAKTAQHNWAILHALPELVATGIPVLVGASRKRFLGALLAGPDGVMRPTDGRDTATAVISALAALHGAWGVRVHDVRASVDAIKVVEAWMGAERIERDG</sequence>
<organism>
    <name type="scientific">Mycobacterium bovis (strain ATCC BAA-935 / AF2122/97)</name>
    <dbReference type="NCBI Taxonomy" id="233413"/>
    <lineage>
        <taxon>Bacteria</taxon>
        <taxon>Bacillati</taxon>
        <taxon>Actinomycetota</taxon>
        <taxon>Actinomycetes</taxon>
        <taxon>Mycobacteriales</taxon>
        <taxon>Mycobacteriaceae</taxon>
        <taxon>Mycobacterium</taxon>
        <taxon>Mycobacterium tuberculosis complex</taxon>
    </lineage>
</organism>
<keyword id="KW-0289">Folate biosynthesis</keyword>
<keyword id="KW-0460">Magnesium</keyword>
<keyword id="KW-0479">Metal-binding</keyword>
<keyword id="KW-1185">Reference proteome</keyword>
<keyword id="KW-0808">Transferase</keyword>
<feature type="chain" id="PRO_0000168211" description="Dihydropteroate synthase">
    <location>
        <begin position="1"/>
        <end position="280"/>
    </location>
</feature>
<feature type="domain" description="Pterin-binding" evidence="4">
    <location>
        <begin position="1"/>
        <end position="265"/>
    </location>
</feature>
<feature type="binding site" evidence="3">
    <location>
        <position position="13"/>
    </location>
    <ligand>
        <name>Mg(2+)</name>
        <dbReference type="ChEBI" id="CHEBI:18420"/>
    </ligand>
</feature>
<feature type="binding site" evidence="2">
    <location>
        <position position="86"/>
    </location>
    <ligand>
        <name>(7,8-dihydropterin-6-yl)methyl diphosphate</name>
        <dbReference type="ChEBI" id="CHEBI:72950"/>
    </ligand>
</feature>
<feature type="binding site" evidence="2">
    <location>
        <position position="105"/>
    </location>
    <ligand>
        <name>(7,8-dihydropterin-6-yl)methyl diphosphate</name>
        <dbReference type="ChEBI" id="CHEBI:72950"/>
    </ligand>
</feature>
<feature type="binding site" evidence="2">
    <location>
        <position position="177"/>
    </location>
    <ligand>
        <name>(7,8-dihydropterin-6-yl)methyl diphosphate</name>
        <dbReference type="ChEBI" id="CHEBI:72950"/>
    </ligand>
</feature>
<feature type="binding site" evidence="2">
    <location>
        <position position="213"/>
    </location>
    <ligand>
        <name>(7,8-dihydropterin-6-yl)methyl diphosphate</name>
        <dbReference type="ChEBI" id="CHEBI:72950"/>
    </ligand>
</feature>
<feature type="binding site" evidence="2">
    <location>
        <begin position="253"/>
        <end position="255"/>
    </location>
    <ligand>
        <name>(7,8-dihydropterin-6-yl)methyl diphosphate</name>
        <dbReference type="ChEBI" id="CHEBI:72950"/>
    </ligand>
</feature>
<dbReference type="EC" id="2.5.1.15"/>
<dbReference type="EMBL" id="LT708304">
    <property type="protein sequence ID" value="SIU02266.1"/>
    <property type="molecule type" value="Genomic_DNA"/>
</dbReference>
<dbReference type="RefSeq" id="NP_857277.1">
    <property type="nucleotide sequence ID" value="NC_002945.3"/>
</dbReference>
<dbReference type="SMR" id="P0A579"/>
<dbReference type="KEGG" id="mbo:BQ2027_MB3638C"/>
<dbReference type="PATRIC" id="fig|233413.5.peg.3984"/>
<dbReference type="UniPathway" id="UPA00077">
    <property type="reaction ID" value="UER00156"/>
</dbReference>
<dbReference type="Proteomes" id="UP000001419">
    <property type="component" value="Chromosome"/>
</dbReference>
<dbReference type="GO" id="GO:0005829">
    <property type="term" value="C:cytosol"/>
    <property type="evidence" value="ECO:0007669"/>
    <property type="project" value="TreeGrafter"/>
</dbReference>
<dbReference type="GO" id="GO:0004156">
    <property type="term" value="F:dihydropteroate synthase activity"/>
    <property type="evidence" value="ECO:0007669"/>
    <property type="project" value="UniProtKB-EC"/>
</dbReference>
<dbReference type="GO" id="GO:0046872">
    <property type="term" value="F:metal ion binding"/>
    <property type="evidence" value="ECO:0007669"/>
    <property type="project" value="UniProtKB-KW"/>
</dbReference>
<dbReference type="GO" id="GO:0046656">
    <property type="term" value="P:folic acid biosynthetic process"/>
    <property type="evidence" value="ECO:0007669"/>
    <property type="project" value="UniProtKB-KW"/>
</dbReference>
<dbReference type="GO" id="GO:0046654">
    <property type="term" value="P:tetrahydrofolate biosynthetic process"/>
    <property type="evidence" value="ECO:0007669"/>
    <property type="project" value="UniProtKB-UniPathway"/>
</dbReference>
<dbReference type="CDD" id="cd00739">
    <property type="entry name" value="DHPS"/>
    <property type="match status" value="1"/>
</dbReference>
<dbReference type="FunFam" id="3.20.20.20:FF:000006">
    <property type="entry name" value="Dihydropteroate synthase"/>
    <property type="match status" value="1"/>
</dbReference>
<dbReference type="Gene3D" id="3.20.20.20">
    <property type="entry name" value="Dihydropteroate synthase-like"/>
    <property type="match status" value="1"/>
</dbReference>
<dbReference type="InterPro" id="IPR045031">
    <property type="entry name" value="DHP_synth-like"/>
</dbReference>
<dbReference type="InterPro" id="IPR006390">
    <property type="entry name" value="DHP_synth_dom"/>
</dbReference>
<dbReference type="InterPro" id="IPR011005">
    <property type="entry name" value="Dihydropteroate_synth-like_sf"/>
</dbReference>
<dbReference type="InterPro" id="IPR000489">
    <property type="entry name" value="Pterin-binding_dom"/>
</dbReference>
<dbReference type="NCBIfam" id="TIGR01496">
    <property type="entry name" value="DHPS"/>
    <property type="match status" value="1"/>
</dbReference>
<dbReference type="PANTHER" id="PTHR20941">
    <property type="entry name" value="FOLATE SYNTHESIS PROTEINS"/>
    <property type="match status" value="1"/>
</dbReference>
<dbReference type="PANTHER" id="PTHR20941:SF1">
    <property type="entry name" value="FOLIC ACID SYNTHESIS PROTEIN FOL1"/>
    <property type="match status" value="1"/>
</dbReference>
<dbReference type="Pfam" id="PF00809">
    <property type="entry name" value="Pterin_bind"/>
    <property type="match status" value="1"/>
</dbReference>
<dbReference type="SUPFAM" id="SSF51717">
    <property type="entry name" value="Dihydropteroate synthetase-like"/>
    <property type="match status" value="1"/>
</dbReference>
<dbReference type="PROSITE" id="PS00792">
    <property type="entry name" value="DHPS_1"/>
    <property type="match status" value="1"/>
</dbReference>
<dbReference type="PROSITE" id="PS00793">
    <property type="entry name" value="DHPS_2"/>
    <property type="match status" value="1"/>
</dbReference>
<dbReference type="PROSITE" id="PS50972">
    <property type="entry name" value="PTERIN_BINDING"/>
    <property type="match status" value="1"/>
</dbReference>